<feature type="chain" id="PRO_0000188714" description="1,4-alpha-glucan branching enzyme GlgB">
    <location>
        <begin position="1"/>
        <end position="729"/>
    </location>
</feature>
<feature type="active site" description="Nucleophile" evidence="1">
    <location>
        <position position="405"/>
    </location>
</feature>
<feature type="active site" description="Proton donor" evidence="1">
    <location>
        <position position="458"/>
    </location>
</feature>
<keyword id="KW-0119">Carbohydrate metabolism</keyword>
<keyword id="KW-0320">Glycogen biosynthesis</keyword>
<keyword id="KW-0321">Glycogen metabolism</keyword>
<keyword id="KW-0328">Glycosyltransferase</keyword>
<keyword id="KW-0808">Transferase</keyword>
<comment type="function">
    <text evidence="1">Catalyzes the formation of the alpha-1,6-glucosidic linkages in glycogen by scission of a 1,4-alpha-linked oligosaccharide from growing alpha-1,4-glucan chains and the subsequent attachment of the oligosaccharide to the alpha-1,6 position.</text>
</comment>
<comment type="catalytic activity">
    <reaction evidence="1">
        <text>Transfers a segment of a (1-&gt;4)-alpha-D-glucan chain to a primary hydroxy group in a similar glucan chain.</text>
        <dbReference type="EC" id="2.4.1.18"/>
    </reaction>
</comment>
<comment type="pathway">
    <text evidence="1">Glycan biosynthesis; glycogen biosynthesis.</text>
</comment>
<comment type="subunit">
    <text evidence="1">Monomer.</text>
</comment>
<comment type="similarity">
    <text evidence="1">Belongs to the glycosyl hydrolase 13 family. GlgB subfamily.</text>
</comment>
<organism>
    <name type="scientific">Mannheimia succiniciproducens (strain KCTC 0769BP / MBEL55E)</name>
    <dbReference type="NCBI Taxonomy" id="221988"/>
    <lineage>
        <taxon>Bacteria</taxon>
        <taxon>Pseudomonadati</taxon>
        <taxon>Pseudomonadota</taxon>
        <taxon>Gammaproteobacteria</taxon>
        <taxon>Pasteurellales</taxon>
        <taxon>Pasteurellaceae</taxon>
        <taxon>Basfia</taxon>
    </lineage>
</organism>
<gene>
    <name evidence="1" type="primary">glgB</name>
    <name type="ordered locus">MS1123</name>
</gene>
<evidence type="ECO:0000255" key="1">
    <source>
        <dbReference type="HAMAP-Rule" id="MF_00685"/>
    </source>
</evidence>
<reference key="1">
    <citation type="journal article" date="2004" name="Nat. Biotechnol.">
        <title>The genome sequence of the capnophilic rumen bacterium Mannheimia succiniciproducens.</title>
        <authorList>
            <person name="Hong S.H."/>
            <person name="Kim J.S."/>
            <person name="Lee S.Y."/>
            <person name="In Y.H."/>
            <person name="Choi S.S."/>
            <person name="Rih J.-K."/>
            <person name="Kim C.H."/>
            <person name="Jeong H."/>
            <person name="Hur C.G."/>
            <person name="Kim J.J."/>
        </authorList>
    </citation>
    <scope>NUCLEOTIDE SEQUENCE [LARGE SCALE GENOMIC DNA]</scope>
    <source>
        <strain>KCTC 0769BP / MBEL55E</strain>
    </source>
</reference>
<dbReference type="EC" id="2.4.1.18" evidence="1"/>
<dbReference type="EMBL" id="AE016827">
    <property type="protein sequence ID" value="AAU37730.1"/>
    <property type="molecule type" value="Genomic_DNA"/>
</dbReference>
<dbReference type="RefSeq" id="WP_011200298.1">
    <property type="nucleotide sequence ID" value="NC_006300.1"/>
</dbReference>
<dbReference type="SMR" id="Q65TI0"/>
<dbReference type="STRING" id="221988.MS1123"/>
<dbReference type="CAZy" id="CBM48">
    <property type="family name" value="Carbohydrate-Binding Module Family 48"/>
</dbReference>
<dbReference type="CAZy" id="GH13">
    <property type="family name" value="Glycoside Hydrolase Family 13"/>
</dbReference>
<dbReference type="KEGG" id="msu:MS1123"/>
<dbReference type="eggNOG" id="COG0296">
    <property type="taxonomic scope" value="Bacteria"/>
</dbReference>
<dbReference type="HOGENOM" id="CLU_004245_3_2_6"/>
<dbReference type="OrthoDB" id="9800174at2"/>
<dbReference type="UniPathway" id="UPA00164"/>
<dbReference type="Proteomes" id="UP000000607">
    <property type="component" value="Chromosome"/>
</dbReference>
<dbReference type="GO" id="GO:0005829">
    <property type="term" value="C:cytosol"/>
    <property type="evidence" value="ECO:0007669"/>
    <property type="project" value="TreeGrafter"/>
</dbReference>
<dbReference type="GO" id="GO:0003844">
    <property type="term" value="F:1,4-alpha-glucan branching enzyme activity"/>
    <property type="evidence" value="ECO:0007669"/>
    <property type="project" value="UniProtKB-UniRule"/>
</dbReference>
<dbReference type="GO" id="GO:0043169">
    <property type="term" value="F:cation binding"/>
    <property type="evidence" value="ECO:0007669"/>
    <property type="project" value="InterPro"/>
</dbReference>
<dbReference type="GO" id="GO:0004553">
    <property type="term" value="F:hydrolase activity, hydrolyzing O-glycosyl compounds"/>
    <property type="evidence" value="ECO:0007669"/>
    <property type="project" value="InterPro"/>
</dbReference>
<dbReference type="GO" id="GO:0005978">
    <property type="term" value="P:glycogen biosynthetic process"/>
    <property type="evidence" value="ECO:0007669"/>
    <property type="project" value="UniProtKB-UniRule"/>
</dbReference>
<dbReference type="CDD" id="cd11322">
    <property type="entry name" value="AmyAc_Glg_BE"/>
    <property type="match status" value="1"/>
</dbReference>
<dbReference type="CDD" id="cd02855">
    <property type="entry name" value="E_set_GBE_prok_N"/>
    <property type="match status" value="1"/>
</dbReference>
<dbReference type="FunFam" id="2.60.40.10:FF:000169">
    <property type="entry name" value="1,4-alpha-glucan branching enzyme GlgB"/>
    <property type="match status" value="1"/>
</dbReference>
<dbReference type="FunFam" id="2.60.40.1180:FF:000002">
    <property type="entry name" value="1,4-alpha-glucan branching enzyme GlgB"/>
    <property type="match status" value="1"/>
</dbReference>
<dbReference type="FunFam" id="3.20.20.80:FF:000003">
    <property type="entry name" value="1,4-alpha-glucan branching enzyme GlgB"/>
    <property type="match status" value="1"/>
</dbReference>
<dbReference type="Gene3D" id="3.20.20.80">
    <property type="entry name" value="Glycosidases"/>
    <property type="match status" value="1"/>
</dbReference>
<dbReference type="Gene3D" id="2.60.40.1180">
    <property type="entry name" value="Golgi alpha-mannosidase II"/>
    <property type="match status" value="1"/>
</dbReference>
<dbReference type="Gene3D" id="2.60.40.10">
    <property type="entry name" value="Immunoglobulins"/>
    <property type="match status" value="2"/>
</dbReference>
<dbReference type="HAMAP" id="MF_00685">
    <property type="entry name" value="GlgB"/>
    <property type="match status" value="1"/>
</dbReference>
<dbReference type="InterPro" id="IPR006048">
    <property type="entry name" value="A-amylase/branching_C"/>
</dbReference>
<dbReference type="InterPro" id="IPR037439">
    <property type="entry name" value="Branching_enzy"/>
</dbReference>
<dbReference type="InterPro" id="IPR006407">
    <property type="entry name" value="GlgB"/>
</dbReference>
<dbReference type="InterPro" id="IPR054169">
    <property type="entry name" value="GlgB_N"/>
</dbReference>
<dbReference type="InterPro" id="IPR044143">
    <property type="entry name" value="GlgB_N_E_set_prok"/>
</dbReference>
<dbReference type="InterPro" id="IPR006047">
    <property type="entry name" value="Glyco_hydro_13_cat_dom"/>
</dbReference>
<dbReference type="InterPro" id="IPR004193">
    <property type="entry name" value="Glyco_hydro_13_N"/>
</dbReference>
<dbReference type="InterPro" id="IPR013780">
    <property type="entry name" value="Glyco_hydro_b"/>
</dbReference>
<dbReference type="InterPro" id="IPR017853">
    <property type="entry name" value="Glycoside_hydrolase_SF"/>
</dbReference>
<dbReference type="InterPro" id="IPR013783">
    <property type="entry name" value="Ig-like_fold"/>
</dbReference>
<dbReference type="InterPro" id="IPR014756">
    <property type="entry name" value="Ig_E-set"/>
</dbReference>
<dbReference type="NCBIfam" id="TIGR01515">
    <property type="entry name" value="branching_enzym"/>
    <property type="match status" value="1"/>
</dbReference>
<dbReference type="NCBIfam" id="NF003811">
    <property type="entry name" value="PRK05402.1"/>
    <property type="match status" value="1"/>
</dbReference>
<dbReference type="NCBIfam" id="NF008967">
    <property type="entry name" value="PRK12313.1"/>
    <property type="match status" value="1"/>
</dbReference>
<dbReference type="PANTHER" id="PTHR43651">
    <property type="entry name" value="1,4-ALPHA-GLUCAN-BRANCHING ENZYME"/>
    <property type="match status" value="1"/>
</dbReference>
<dbReference type="PANTHER" id="PTHR43651:SF3">
    <property type="entry name" value="1,4-ALPHA-GLUCAN-BRANCHING ENZYME"/>
    <property type="match status" value="1"/>
</dbReference>
<dbReference type="Pfam" id="PF00128">
    <property type="entry name" value="Alpha-amylase"/>
    <property type="match status" value="1"/>
</dbReference>
<dbReference type="Pfam" id="PF02806">
    <property type="entry name" value="Alpha-amylase_C"/>
    <property type="match status" value="1"/>
</dbReference>
<dbReference type="Pfam" id="PF02922">
    <property type="entry name" value="CBM_48"/>
    <property type="match status" value="1"/>
</dbReference>
<dbReference type="Pfam" id="PF22019">
    <property type="entry name" value="GlgB_N"/>
    <property type="match status" value="1"/>
</dbReference>
<dbReference type="PIRSF" id="PIRSF000463">
    <property type="entry name" value="GlgB"/>
    <property type="match status" value="1"/>
</dbReference>
<dbReference type="SMART" id="SM00642">
    <property type="entry name" value="Aamy"/>
    <property type="match status" value="1"/>
</dbReference>
<dbReference type="SUPFAM" id="SSF51445">
    <property type="entry name" value="(Trans)glycosidases"/>
    <property type="match status" value="1"/>
</dbReference>
<dbReference type="SUPFAM" id="SSF81296">
    <property type="entry name" value="E set domains"/>
    <property type="match status" value="2"/>
</dbReference>
<dbReference type="SUPFAM" id="SSF51011">
    <property type="entry name" value="Glycosyl hydrolase domain"/>
    <property type="match status" value="1"/>
</dbReference>
<protein>
    <recommendedName>
        <fullName evidence="1">1,4-alpha-glucan branching enzyme GlgB</fullName>
        <ecNumber evidence="1">2.4.1.18</ecNumber>
    </recommendedName>
    <alternativeName>
        <fullName evidence="1">1,4-alpha-D-glucan:1,4-alpha-D-glucan 6-glucosyl-transferase</fullName>
    </alternativeName>
    <alternativeName>
        <fullName evidence="1">Alpha-(1-&gt;4)-glucan branching enzyme</fullName>
    </alternativeName>
    <alternativeName>
        <fullName evidence="1">Glycogen branching enzyme</fullName>
        <shortName evidence="1">BE</shortName>
    </alternativeName>
</protein>
<accession>Q65TI0</accession>
<proteinExistence type="inferred from homology"/>
<name>GLGB_MANSM</name>
<sequence length="729" mass="83760">MKKLVAQSVIDAFFDGTHSDPFAVLGMHETHNGIEIRVLLPEAHRVIVIDKETHKAVVELELVDERGFFNAIVPKANQFFAYELQVYWGKESQILEDPYRFHPMINELDNWLLAEGSHLRPYEVLGAHFVEYDNVAGVNFRVWAPNAKRVSVVGDFNYWDGRRHPMRFHPASGIWELFLPKVALGQLYKFELIDSNNQLRLKADPYAFAAQLRPDTASQVSALPEIVEMTEKRRAANQSDKPISIYEVHLGSWRRNLENNFWLDYDEIADELIPYVKEMGFTHIELLPISEYPFDGSWGYQPLGLYAPTSRFGTPDGFKRLIEKAHESGINVILDWVPGHFPSDTHGLAAFDGTSLYEYADPKEGYHQDWNTLIYNYGRHEVKNYLSGNALYWVERFGLDGLRVDAVASMIYRDYSRRDGEWVPNQYGGRENLEAIEFLKHTNYVLGTELPGVAAIAEESTSFPGVTLPPEHGGLGFHYKWNMGWMNDTLEYMKLDPVYRQYHHGKMTFAMLYQYSENFVLPLSHDEVVHGKGSLITKMSGDTWQKFANLRAYYGYMWAFPGKKLLFMGNEFAQGREWNYQESLDWFLLDDGQGGGWHSGVQRLVKDLNKTYQNQTALFELDTNPQGFEWLVVDDNQNSVFAFERRSKSGEVIIVVSNFTPVPRDNYRIGVNEPGKYEEILNTDSAYYKGSNLGNYGEVIAEEIENHGKAQSISVMVPPLATVYLRLKK</sequence>